<evidence type="ECO:0000255" key="1">
    <source>
        <dbReference type="HAMAP-Rule" id="MF_00352"/>
    </source>
</evidence>
<geneLocation type="chloroplast"/>
<keyword id="KW-0004">4Fe-4S</keyword>
<keyword id="KW-0067">ATP-binding</keyword>
<keyword id="KW-0149">Chlorophyll biosynthesis</keyword>
<keyword id="KW-0150">Chloroplast</keyword>
<keyword id="KW-0408">Iron</keyword>
<keyword id="KW-0411">Iron-sulfur</keyword>
<keyword id="KW-0479">Metal-binding</keyword>
<keyword id="KW-0547">Nucleotide-binding</keyword>
<keyword id="KW-0560">Oxidoreductase</keyword>
<keyword id="KW-0602">Photosynthesis</keyword>
<keyword id="KW-0934">Plastid</keyword>
<comment type="function">
    <text evidence="1">Component of the dark-operative protochlorophyllide reductase (DPOR) that uses Mg-ATP and reduced ferredoxin to reduce ring D of protochlorophyllide (Pchlide) to form chlorophyllide a (Chlide). This reaction is light-independent. The NB-protein (ChlN-ChlB) is the catalytic component of the complex.</text>
</comment>
<comment type="catalytic activity">
    <reaction evidence="1">
        <text>chlorophyllide a + oxidized 2[4Fe-4S]-[ferredoxin] + 2 ADP + 2 phosphate = protochlorophyllide a + reduced 2[4Fe-4S]-[ferredoxin] + 2 ATP + 2 H2O</text>
        <dbReference type="Rhea" id="RHEA:28202"/>
        <dbReference type="Rhea" id="RHEA-COMP:10002"/>
        <dbReference type="Rhea" id="RHEA-COMP:10004"/>
        <dbReference type="ChEBI" id="CHEBI:15377"/>
        <dbReference type="ChEBI" id="CHEBI:30616"/>
        <dbReference type="ChEBI" id="CHEBI:33722"/>
        <dbReference type="ChEBI" id="CHEBI:33723"/>
        <dbReference type="ChEBI" id="CHEBI:43474"/>
        <dbReference type="ChEBI" id="CHEBI:83348"/>
        <dbReference type="ChEBI" id="CHEBI:83350"/>
        <dbReference type="ChEBI" id="CHEBI:456216"/>
        <dbReference type="EC" id="1.3.7.7"/>
    </reaction>
</comment>
<comment type="cofactor">
    <cofactor evidence="1">
        <name>[4Fe-4S] cluster</name>
        <dbReference type="ChEBI" id="CHEBI:49883"/>
    </cofactor>
    <text evidence="1">Binds 1 [4Fe-4S] cluster per heterodimer. The cluster is bound at the heterodimer interface by residues from both subunits.</text>
</comment>
<comment type="pathway">
    <text evidence="1">Porphyrin-containing compound metabolism; chlorophyll biosynthesis (light-independent).</text>
</comment>
<comment type="subunit">
    <text evidence="1">Protochlorophyllide reductase is composed of three subunits; ChlL, ChlN and ChlB. Forms a heterotetramer of two ChlB and two ChlN subunits.</text>
</comment>
<comment type="subcellular location">
    <subcellularLocation>
        <location>Plastid</location>
        <location>Chloroplast</location>
    </subcellularLocation>
</comment>
<comment type="similarity">
    <text evidence="1">Belongs to the BchN/ChlN family.</text>
</comment>
<organism>
    <name type="scientific">Marchantia polymorpha</name>
    <name type="common">Common liverwort</name>
    <name type="synonym">Marchantia aquatica</name>
    <dbReference type="NCBI Taxonomy" id="3197"/>
    <lineage>
        <taxon>Eukaryota</taxon>
        <taxon>Viridiplantae</taxon>
        <taxon>Streptophyta</taxon>
        <taxon>Embryophyta</taxon>
        <taxon>Marchantiophyta</taxon>
        <taxon>Marchantiopsida</taxon>
        <taxon>Marchantiidae</taxon>
        <taxon>Marchantiales</taxon>
        <taxon>Marchantiaceae</taxon>
        <taxon>Marchantia</taxon>
    </lineage>
</organism>
<accession>P26156</accession>
<protein>
    <recommendedName>
        <fullName evidence="1">Light-independent protochlorophyllide reductase subunit N</fullName>
        <shortName evidence="1">DPOR subunit N</shortName>
        <shortName evidence="1">LI-POR subunit N</shortName>
        <ecNumber evidence="1">1.3.7.7</ecNumber>
    </recommendedName>
</protein>
<gene>
    <name evidence="1" type="primary">chlN</name>
</gene>
<reference key="1">
    <citation type="journal article" date="1988" name="J. Mol. Biol.">
        <title>Structure and organization of Marchantia polymorpha chloroplast genome. IV. Inverted repeat and small single copy regions.</title>
        <authorList>
            <person name="Kohchi T."/>
            <person name="Shirai H."/>
            <person name="Fukuzawa H."/>
            <person name="Sano T."/>
            <person name="Komano T."/>
            <person name="Umesono K."/>
            <person name="Inokuchi H."/>
            <person name="Ozeki H."/>
            <person name="Ohyama K."/>
        </authorList>
    </citation>
    <scope>NUCLEOTIDE SEQUENCE [GENOMIC DNA]</scope>
</reference>
<reference key="2">
    <citation type="journal article" date="1986" name="Nature">
        <title>Chloroplast gene organization deduced from complete sequence of liverwort Marchantia polymorpha chloroplast DNA.</title>
        <authorList>
            <person name="Ohyama K."/>
            <person name="Fukuzawa H."/>
            <person name="Kohchi T."/>
            <person name="Shirai H."/>
            <person name="Sano T."/>
            <person name="Sano S."/>
            <person name="Umesono K."/>
            <person name="Shiki Y."/>
            <person name="Takeuchi M."/>
            <person name="Chang Z."/>
            <person name="Aota S."/>
            <person name="Inokuchi H."/>
            <person name="Ozeki H."/>
        </authorList>
    </citation>
    <scope>NUCLEOTIDE SEQUENCE [LARGE SCALE GENOMIC DNA]</scope>
</reference>
<name>CHLN_MARPO</name>
<proteinExistence type="inferred from homology"/>
<feature type="chain" id="PRO_0000208614" description="Light-independent protochlorophyllide reductase subunit N">
    <location>
        <begin position="1"/>
        <end position="465"/>
    </location>
</feature>
<feature type="binding site" evidence="1">
    <location>
        <position position="22"/>
    </location>
    <ligand>
        <name>[4Fe-4S] cluster</name>
        <dbReference type="ChEBI" id="CHEBI:49883"/>
        <note>ligand shared with heterodimeric partner</note>
    </ligand>
</feature>
<feature type="binding site" evidence="1">
    <location>
        <position position="47"/>
    </location>
    <ligand>
        <name>[4Fe-4S] cluster</name>
        <dbReference type="ChEBI" id="CHEBI:49883"/>
        <note>ligand shared with heterodimeric partner</note>
    </ligand>
</feature>
<feature type="binding site" evidence="1">
    <location>
        <position position="107"/>
    </location>
    <ligand>
        <name>[4Fe-4S] cluster</name>
        <dbReference type="ChEBI" id="CHEBI:49883"/>
        <note>ligand shared with heterodimeric partner</note>
    </ligand>
</feature>
<sequence>MSIKISETLTFECETGNYHTFCPISCVAWLYQKIEDSFFLVVGTKTCGYFLQNALGVMIFAEPRYAMAELEEGDISAQLNDYEELKRLCVQIKKDRNPSVIIWIGTCTTEIIKMDLEGMAPKLENEIEIPIVVARANGLDYAFTQGEDTVLAAMAHRCPEQKTEIEKKIDDKSIQELFSFLPLKTKEKSNKSFTLKNTFSLVLFGSLPSTVASQLSLELKRQSIHVSGWLPAQRYTDLPILGDKVYVCGVNPFLSRTATTLMRRRKCKLIGAPFPIGPDGTRAWIEKICSVFNIETQGLEEREQQVWESLKNYLNLVRGKSVFFMGDNLLEISLARFLIRCGMIVYEIGIPYMDKRYQAAELTLLQETCKKMCIPMPRIVEKPDNYNQIQRMRELQPDLAITGMAHANPLEARGINTKWSVEFTFAQIHGFTNAKDVLELVTRPLRRNNNLENLGWTNLIKIQKR</sequence>
<dbReference type="EC" id="1.3.7.7" evidence="1"/>
<dbReference type="EMBL" id="X04465">
    <property type="status" value="NOT_ANNOTATED_CDS"/>
    <property type="molecule type" value="Genomic_DNA"/>
</dbReference>
<dbReference type="PIR" id="S01518">
    <property type="entry name" value="S01518"/>
</dbReference>
<dbReference type="SMR" id="P26156"/>
<dbReference type="UniPathway" id="UPA00670"/>
<dbReference type="GO" id="GO:0009507">
    <property type="term" value="C:chloroplast"/>
    <property type="evidence" value="ECO:0007669"/>
    <property type="project" value="UniProtKB-SubCell"/>
</dbReference>
<dbReference type="GO" id="GO:0051539">
    <property type="term" value="F:4 iron, 4 sulfur cluster binding"/>
    <property type="evidence" value="ECO:0007669"/>
    <property type="project" value="UniProtKB-UniRule"/>
</dbReference>
<dbReference type="GO" id="GO:0005524">
    <property type="term" value="F:ATP binding"/>
    <property type="evidence" value="ECO:0007669"/>
    <property type="project" value="UniProtKB-UniRule"/>
</dbReference>
<dbReference type="GO" id="GO:0046872">
    <property type="term" value="F:metal ion binding"/>
    <property type="evidence" value="ECO:0007669"/>
    <property type="project" value="UniProtKB-KW"/>
</dbReference>
<dbReference type="GO" id="GO:0016730">
    <property type="term" value="F:oxidoreductase activity, acting on iron-sulfur proteins as donors"/>
    <property type="evidence" value="ECO:0007669"/>
    <property type="project" value="InterPro"/>
</dbReference>
<dbReference type="GO" id="GO:0016636">
    <property type="term" value="F:oxidoreductase activity, acting on the CH-CH group of donors, iron-sulfur protein as acceptor"/>
    <property type="evidence" value="ECO:0007669"/>
    <property type="project" value="UniProtKB-UniRule"/>
</dbReference>
<dbReference type="GO" id="GO:0036068">
    <property type="term" value="P:light-independent chlorophyll biosynthetic process"/>
    <property type="evidence" value="ECO:0007669"/>
    <property type="project" value="UniProtKB-UniRule"/>
</dbReference>
<dbReference type="GO" id="GO:0019685">
    <property type="term" value="P:photosynthesis, dark reaction"/>
    <property type="evidence" value="ECO:0007669"/>
    <property type="project" value="InterPro"/>
</dbReference>
<dbReference type="CDD" id="cd01979">
    <property type="entry name" value="Pchlide_reductase_N"/>
    <property type="match status" value="1"/>
</dbReference>
<dbReference type="Gene3D" id="3.40.50.1980">
    <property type="entry name" value="Nitrogenase molybdenum iron protein domain"/>
    <property type="match status" value="3"/>
</dbReference>
<dbReference type="HAMAP" id="MF_00352">
    <property type="entry name" value="ChlN_BchN"/>
    <property type="match status" value="1"/>
</dbReference>
<dbReference type="InterPro" id="IPR050293">
    <property type="entry name" value="LIPOR_BchN/ChlN"/>
</dbReference>
<dbReference type="InterPro" id="IPR000510">
    <property type="entry name" value="Nase/OxRdtase_comp1"/>
</dbReference>
<dbReference type="InterPro" id="IPR005970">
    <property type="entry name" value="Protochl_reductN"/>
</dbReference>
<dbReference type="NCBIfam" id="TIGR01279">
    <property type="entry name" value="DPOR_bchN"/>
    <property type="match status" value="1"/>
</dbReference>
<dbReference type="NCBIfam" id="NF002768">
    <property type="entry name" value="PRK02842.1"/>
    <property type="match status" value="1"/>
</dbReference>
<dbReference type="PANTHER" id="PTHR39429">
    <property type="entry name" value="LIGHT-INDEPENDENT PROTOCHLOROPHYLLIDE REDUCTASE SUBUNIT N"/>
    <property type="match status" value="1"/>
</dbReference>
<dbReference type="PANTHER" id="PTHR39429:SF3">
    <property type="entry name" value="LIGHT-INDEPENDENT PROTOCHLOROPHYLLIDE REDUCTASE SUBUNIT N"/>
    <property type="match status" value="1"/>
</dbReference>
<dbReference type="Pfam" id="PF00148">
    <property type="entry name" value="Oxidored_nitro"/>
    <property type="match status" value="1"/>
</dbReference>
<dbReference type="PIRSF" id="PIRSF000162">
    <property type="entry name" value="P_chlorophyll_rd"/>
    <property type="match status" value="1"/>
</dbReference>
<dbReference type="SUPFAM" id="SSF53807">
    <property type="entry name" value="Helical backbone' metal receptor"/>
    <property type="match status" value="1"/>
</dbReference>